<gene>
    <name evidence="1" type="primary">mraZ</name>
    <name type="ordered locus">YpAngola_A2927</name>
</gene>
<dbReference type="EMBL" id="CP000901">
    <property type="protein sequence ID" value="ABX87409.1"/>
    <property type="molecule type" value="Genomic_DNA"/>
</dbReference>
<dbReference type="RefSeq" id="WP_002210443.1">
    <property type="nucleotide sequence ID" value="NZ_CP009935.1"/>
</dbReference>
<dbReference type="SMR" id="A9R133"/>
<dbReference type="GeneID" id="57974069"/>
<dbReference type="KEGG" id="ypg:YpAngola_A2927"/>
<dbReference type="PATRIC" id="fig|349746.12.peg.3970"/>
<dbReference type="GO" id="GO:0005737">
    <property type="term" value="C:cytoplasm"/>
    <property type="evidence" value="ECO:0007669"/>
    <property type="project" value="UniProtKB-UniRule"/>
</dbReference>
<dbReference type="GO" id="GO:0009295">
    <property type="term" value="C:nucleoid"/>
    <property type="evidence" value="ECO:0007669"/>
    <property type="project" value="UniProtKB-SubCell"/>
</dbReference>
<dbReference type="GO" id="GO:0003700">
    <property type="term" value="F:DNA-binding transcription factor activity"/>
    <property type="evidence" value="ECO:0007669"/>
    <property type="project" value="UniProtKB-UniRule"/>
</dbReference>
<dbReference type="GO" id="GO:0000976">
    <property type="term" value="F:transcription cis-regulatory region binding"/>
    <property type="evidence" value="ECO:0007669"/>
    <property type="project" value="TreeGrafter"/>
</dbReference>
<dbReference type="GO" id="GO:2000143">
    <property type="term" value="P:negative regulation of DNA-templated transcription initiation"/>
    <property type="evidence" value="ECO:0007669"/>
    <property type="project" value="TreeGrafter"/>
</dbReference>
<dbReference type="CDD" id="cd16321">
    <property type="entry name" value="MraZ_C"/>
    <property type="match status" value="1"/>
</dbReference>
<dbReference type="CDD" id="cd16320">
    <property type="entry name" value="MraZ_N"/>
    <property type="match status" value="1"/>
</dbReference>
<dbReference type="FunFam" id="3.40.1550.20:FF:000001">
    <property type="entry name" value="Transcriptional regulator MraZ"/>
    <property type="match status" value="1"/>
</dbReference>
<dbReference type="Gene3D" id="3.40.1550.20">
    <property type="entry name" value="Transcriptional regulator MraZ domain"/>
    <property type="match status" value="1"/>
</dbReference>
<dbReference type="HAMAP" id="MF_01008">
    <property type="entry name" value="MraZ"/>
    <property type="match status" value="1"/>
</dbReference>
<dbReference type="InterPro" id="IPR003444">
    <property type="entry name" value="MraZ"/>
</dbReference>
<dbReference type="InterPro" id="IPR035644">
    <property type="entry name" value="MraZ_C"/>
</dbReference>
<dbReference type="InterPro" id="IPR020603">
    <property type="entry name" value="MraZ_dom"/>
</dbReference>
<dbReference type="InterPro" id="IPR035642">
    <property type="entry name" value="MraZ_N"/>
</dbReference>
<dbReference type="InterPro" id="IPR038619">
    <property type="entry name" value="MraZ_sf"/>
</dbReference>
<dbReference type="InterPro" id="IPR007159">
    <property type="entry name" value="SpoVT-AbrB_dom"/>
</dbReference>
<dbReference type="InterPro" id="IPR037914">
    <property type="entry name" value="SpoVT-AbrB_sf"/>
</dbReference>
<dbReference type="NCBIfam" id="TIGR00242">
    <property type="entry name" value="division/cell wall cluster transcriptional repressor MraZ"/>
    <property type="match status" value="1"/>
</dbReference>
<dbReference type="PANTHER" id="PTHR34701">
    <property type="entry name" value="TRANSCRIPTIONAL REGULATOR MRAZ"/>
    <property type="match status" value="1"/>
</dbReference>
<dbReference type="PANTHER" id="PTHR34701:SF1">
    <property type="entry name" value="TRANSCRIPTIONAL REGULATOR MRAZ"/>
    <property type="match status" value="1"/>
</dbReference>
<dbReference type="Pfam" id="PF02381">
    <property type="entry name" value="MraZ"/>
    <property type="match status" value="2"/>
</dbReference>
<dbReference type="SUPFAM" id="SSF89447">
    <property type="entry name" value="AbrB/MazE/MraZ-like"/>
    <property type="match status" value="1"/>
</dbReference>
<dbReference type="PROSITE" id="PS51740">
    <property type="entry name" value="SPOVT_ABRB"/>
    <property type="match status" value="2"/>
</dbReference>
<feature type="chain" id="PRO_1000191344" description="Transcriptional regulator MraZ">
    <location>
        <begin position="1"/>
        <end position="152"/>
    </location>
</feature>
<feature type="domain" description="SpoVT-AbrB 1" evidence="2">
    <location>
        <begin position="5"/>
        <end position="52"/>
    </location>
</feature>
<feature type="domain" description="SpoVT-AbrB 2" evidence="2">
    <location>
        <begin position="81"/>
        <end position="124"/>
    </location>
</feature>
<accession>A9R133</accession>
<reference key="1">
    <citation type="journal article" date="2010" name="J. Bacteriol.">
        <title>Genome sequence of the deep-rooted Yersinia pestis strain Angola reveals new insights into the evolution and pangenome of the plague bacterium.</title>
        <authorList>
            <person name="Eppinger M."/>
            <person name="Worsham P.L."/>
            <person name="Nikolich M.P."/>
            <person name="Riley D.R."/>
            <person name="Sebastian Y."/>
            <person name="Mou S."/>
            <person name="Achtman M."/>
            <person name="Lindler L.E."/>
            <person name="Ravel J."/>
        </authorList>
    </citation>
    <scope>NUCLEOTIDE SEQUENCE [LARGE SCALE GENOMIC DNA]</scope>
    <source>
        <strain>Angola</strain>
    </source>
</reference>
<keyword id="KW-0963">Cytoplasm</keyword>
<keyword id="KW-0238">DNA-binding</keyword>
<keyword id="KW-0677">Repeat</keyword>
<keyword id="KW-0678">Repressor</keyword>
<keyword id="KW-0804">Transcription</keyword>
<keyword id="KW-0805">Transcription regulation</keyword>
<sequence length="152" mass="17414">MFRGATMVNLDSKGRLAVPTRYRESLNEESQGQMVCTIDLHQPCLLLYPLPEWEIIEQKLSRLSSMNPAERRVQRLLLGHASECQMDGAGRLLIAGTLRQHAGLNKEVMLVGQFNKFELWDEQTWYQQVKDDIDAEQSTQEPLSERLQGLSL</sequence>
<comment type="function">
    <text evidence="1">Negatively regulates its own expression and that of the subsequent genes in the proximal part of the division and cell wall (dcw) gene cluster. Acts by binding directly to DNA. May also regulate the expression of genes outside the dcw cluster.</text>
</comment>
<comment type="subunit">
    <text evidence="1">Forms oligomers.</text>
</comment>
<comment type="subcellular location">
    <subcellularLocation>
        <location evidence="1">Cytoplasm</location>
        <location evidence="1">Nucleoid</location>
    </subcellularLocation>
</comment>
<comment type="similarity">
    <text evidence="1">Belongs to the MraZ family.</text>
</comment>
<evidence type="ECO:0000255" key="1">
    <source>
        <dbReference type="HAMAP-Rule" id="MF_01008"/>
    </source>
</evidence>
<evidence type="ECO:0000255" key="2">
    <source>
        <dbReference type="PROSITE-ProRule" id="PRU01076"/>
    </source>
</evidence>
<protein>
    <recommendedName>
        <fullName>Transcriptional regulator MraZ</fullName>
    </recommendedName>
</protein>
<organism>
    <name type="scientific">Yersinia pestis bv. Antiqua (strain Angola)</name>
    <dbReference type="NCBI Taxonomy" id="349746"/>
    <lineage>
        <taxon>Bacteria</taxon>
        <taxon>Pseudomonadati</taxon>
        <taxon>Pseudomonadota</taxon>
        <taxon>Gammaproteobacteria</taxon>
        <taxon>Enterobacterales</taxon>
        <taxon>Yersiniaceae</taxon>
        <taxon>Yersinia</taxon>
    </lineage>
</organism>
<name>MRAZ_YERPG</name>
<proteinExistence type="inferred from homology"/>